<protein>
    <recommendedName>
        <fullName evidence="1">UPF0250 protein XF_1271</fullName>
    </recommendedName>
</protein>
<evidence type="ECO:0000255" key="1">
    <source>
        <dbReference type="HAMAP-Rule" id="MF_00659"/>
    </source>
</evidence>
<accession>Q9PDV8</accession>
<dbReference type="EMBL" id="AE003849">
    <property type="protein sequence ID" value="AAF84080.1"/>
    <property type="molecule type" value="Genomic_DNA"/>
</dbReference>
<dbReference type="PIR" id="E82701">
    <property type="entry name" value="E82701"/>
</dbReference>
<dbReference type="RefSeq" id="WP_010893777.1">
    <property type="nucleotide sequence ID" value="NC_002488.3"/>
</dbReference>
<dbReference type="SMR" id="Q9PDV8"/>
<dbReference type="STRING" id="160492.XF_1271"/>
<dbReference type="KEGG" id="xfa:XF_1271"/>
<dbReference type="eggNOG" id="COG2921">
    <property type="taxonomic scope" value="Bacteria"/>
</dbReference>
<dbReference type="HOGENOM" id="CLU_161438_1_1_6"/>
<dbReference type="Proteomes" id="UP000000812">
    <property type="component" value="Chromosome"/>
</dbReference>
<dbReference type="Gene3D" id="3.30.70.260">
    <property type="match status" value="1"/>
</dbReference>
<dbReference type="HAMAP" id="MF_00659">
    <property type="entry name" value="UPF0250"/>
    <property type="match status" value="1"/>
</dbReference>
<dbReference type="InterPro" id="IPR007454">
    <property type="entry name" value="UPF0250_YbeD-like"/>
</dbReference>
<dbReference type="InterPro" id="IPR027471">
    <property type="entry name" value="YbeD-like_sf"/>
</dbReference>
<dbReference type="NCBIfam" id="NF002066">
    <property type="entry name" value="PRK00907.1"/>
    <property type="match status" value="1"/>
</dbReference>
<dbReference type="Pfam" id="PF04359">
    <property type="entry name" value="DUF493"/>
    <property type="match status" value="1"/>
</dbReference>
<dbReference type="SUPFAM" id="SSF117991">
    <property type="entry name" value="YbeD/HP0495-like"/>
    <property type="match status" value="1"/>
</dbReference>
<feature type="chain" id="PRO_0000209320" description="UPF0250 protein XF_1271">
    <location>
        <begin position="1"/>
        <end position="92"/>
    </location>
</feature>
<gene>
    <name type="ordered locus">XF_1271</name>
</gene>
<proteinExistence type="inferred from homology"/>
<comment type="similarity">
    <text evidence="1">Belongs to the UPF0250 family.</text>
</comment>
<sequence length="92" mass="10480">MEIKSDHSEHGFQFPGTFELSAVGTAGKALETELPRLLARCGVELVQERISWKHSSTGKYVSVRISFRALDREQYDAAHQVLRDHPEVKWTL</sequence>
<organism>
    <name type="scientific">Xylella fastidiosa (strain 9a5c)</name>
    <dbReference type="NCBI Taxonomy" id="160492"/>
    <lineage>
        <taxon>Bacteria</taxon>
        <taxon>Pseudomonadati</taxon>
        <taxon>Pseudomonadota</taxon>
        <taxon>Gammaproteobacteria</taxon>
        <taxon>Lysobacterales</taxon>
        <taxon>Lysobacteraceae</taxon>
        <taxon>Xylella</taxon>
    </lineage>
</organism>
<name>Y1271_XYLFA</name>
<reference key="1">
    <citation type="journal article" date="2000" name="Nature">
        <title>The genome sequence of the plant pathogen Xylella fastidiosa.</title>
        <authorList>
            <person name="Simpson A.J.G."/>
            <person name="Reinach F.C."/>
            <person name="Arruda P."/>
            <person name="Abreu F.A."/>
            <person name="Acencio M."/>
            <person name="Alvarenga R."/>
            <person name="Alves L.M.C."/>
            <person name="Araya J.E."/>
            <person name="Baia G.S."/>
            <person name="Baptista C.S."/>
            <person name="Barros M.H."/>
            <person name="Bonaccorsi E.D."/>
            <person name="Bordin S."/>
            <person name="Bove J.M."/>
            <person name="Briones M.R.S."/>
            <person name="Bueno M.R.P."/>
            <person name="Camargo A.A."/>
            <person name="Camargo L.E.A."/>
            <person name="Carraro D.M."/>
            <person name="Carrer H."/>
            <person name="Colauto N.B."/>
            <person name="Colombo C."/>
            <person name="Costa F.F."/>
            <person name="Costa M.C.R."/>
            <person name="Costa-Neto C.M."/>
            <person name="Coutinho L.L."/>
            <person name="Cristofani M."/>
            <person name="Dias-Neto E."/>
            <person name="Docena C."/>
            <person name="El-Dorry H."/>
            <person name="Facincani A.P."/>
            <person name="Ferreira A.J.S."/>
            <person name="Ferreira V.C.A."/>
            <person name="Ferro J.A."/>
            <person name="Fraga J.S."/>
            <person name="Franca S.C."/>
            <person name="Franco M.C."/>
            <person name="Frohme M."/>
            <person name="Furlan L.R."/>
            <person name="Garnier M."/>
            <person name="Goldman G.H."/>
            <person name="Goldman M.H.S."/>
            <person name="Gomes S.L."/>
            <person name="Gruber A."/>
            <person name="Ho P.L."/>
            <person name="Hoheisel J.D."/>
            <person name="Junqueira M.L."/>
            <person name="Kemper E.L."/>
            <person name="Kitajima J.P."/>
            <person name="Krieger J.E."/>
            <person name="Kuramae E.E."/>
            <person name="Laigret F."/>
            <person name="Lambais M.R."/>
            <person name="Leite L.C.C."/>
            <person name="Lemos E.G.M."/>
            <person name="Lemos M.V.F."/>
            <person name="Lopes S.A."/>
            <person name="Lopes C.R."/>
            <person name="Machado J.A."/>
            <person name="Machado M.A."/>
            <person name="Madeira A.M.B.N."/>
            <person name="Madeira H.M.F."/>
            <person name="Marino C.L."/>
            <person name="Marques M.V."/>
            <person name="Martins E.A.L."/>
            <person name="Martins E.M.F."/>
            <person name="Matsukuma A.Y."/>
            <person name="Menck C.F.M."/>
            <person name="Miracca E.C."/>
            <person name="Miyaki C.Y."/>
            <person name="Monteiro-Vitorello C.B."/>
            <person name="Moon D.H."/>
            <person name="Nagai M.A."/>
            <person name="Nascimento A.L.T.O."/>
            <person name="Netto L.E.S."/>
            <person name="Nhani A. Jr."/>
            <person name="Nobrega F.G."/>
            <person name="Nunes L.R."/>
            <person name="Oliveira M.A."/>
            <person name="de Oliveira M.C."/>
            <person name="de Oliveira R.C."/>
            <person name="Palmieri D.A."/>
            <person name="Paris A."/>
            <person name="Peixoto B.R."/>
            <person name="Pereira G.A.G."/>
            <person name="Pereira H.A. Jr."/>
            <person name="Pesquero J.B."/>
            <person name="Quaggio R.B."/>
            <person name="Roberto P.G."/>
            <person name="Rodrigues V."/>
            <person name="de Rosa A.J.M."/>
            <person name="de Rosa V.E. Jr."/>
            <person name="de Sa R.G."/>
            <person name="Santelli R.V."/>
            <person name="Sawasaki H.E."/>
            <person name="da Silva A.C.R."/>
            <person name="da Silva A.M."/>
            <person name="da Silva F.R."/>
            <person name="Silva W.A. Jr."/>
            <person name="da Silveira J.F."/>
            <person name="Silvestri M.L.Z."/>
            <person name="Siqueira W.J."/>
            <person name="de Souza A.A."/>
            <person name="de Souza A.P."/>
            <person name="Terenzi M.F."/>
            <person name="Truffi D."/>
            <person name="Tsai S.M."/>
            <person name="Tsuhako M.H."/>
            <person name="Vallada H."/>
            <person name="Van Sluys M.A."/>
            <person name="Verjovski-Almeida S."/>
            <person name="Vettore A.L."/>
            <person name="Zago M.A."/>
            <person name="Zatz M."/>
            <person name="Meidanis J."/>
            <person name="Setubal J.C."/>
        </authorList>
    </citation>
    <scope>NUCLEOTIDE SEQUENCE [LARGE SCALE GENOMIC DNA]</scope>
    <source>
        <strain>9a5c</strain>
    </source>
</reference>